<keyword id="KW-0002">3D-structure</keyword>
<keyword id="KW-0007">Acetylation</keyword>
<keyword id="KW-0106">Calcium</keyword>
<keyword id="KW-0479">Metal-binding</keyword>
<keyword id="KW-0505">Motor protein</keyword>
<keyword id="KW-0514">Muscle protein</keyword>
<keyword id="KW-0518">Myosin</keyword>
<keyword id="KW-0597">Phosphoprotein</keyword>
<keyword id="KW-1185">Reference proteome</keyword>
<keyword id="KW-0677">Repeat</keyword>
<sequence length="172" mass="19911">MSSKRAKTKTTKKRPQRATSNVFAMFDQSQIQEFKEAFNMIDQNRDGFIDKEDLHDMLASLGKNPTDEYLDAMMNEAPGPINFTMFLTMFGEKLNGTDPEDVIRNAFACFDEEATGFIQEDYLRELLTTMGDRFTDEEVDELYREAPIDKKGNFNYIEFTRILKHGAKDKDD</sequence>
<dbReference type="EMBL" id="X16532">
    <property type="protein sequence ID" value="CAA34535.1"/>
    <property type="molecule type" value="mRNA"/>
</dbReference>
<dbReference type="PIR" id="A61034">
    <property type="entry name" value="A61034"/>
</dbReference>
<dbReference type="PIR" id="S05530">
    <property type="entry name" value="MOCH2G"/>
</dbReference>
<dbReference type="RefSeq" id="NP_990672.1">
    <property type="nucleotide sequence ID" value="NM_205341.4"/>
</dbReference>
<dbReference type="RefSeq" id="XP_015133434.1">
    <property type="nucleotide sequence ID" value="XM_015277948.1"/>
</dbReference>
<dbReference type="PDB" id="7UDT">
    <property type="method" value="EM"/>
    <property type="resolution" value="3.17 A"/>
    <property type="chains" value="G=22-167"/>
</dbReference>
<dbReference type="PDB" id="7UDU">
    <property type="method" value="EM"/>
    <property type="resolution" value="4.15 A"/>
    <property type="chains" value="E=22-167"/>
</dbReference>
<dbReference type="PDBsum" id="7UDT"/>
<dbReference type="PDBsum" id="7UDU"/>
<dbReference type="EMDB" id="EMD-26459"/>
<dbReference type="EMDB" id="EMD-26460"/>
<dbReference type="SMR" id="P24032"/>
<dbReference type="FunCoup" id="P24032">
    <property type="interactions" value="354"/>
</dbReference>
<dbReference type="IntAct" id="P24032">
    <property type="interactions" value="1"/>
</dbReference>
<dbReference type="STRING" id="9031.ENSGALP00000059802"/>
<dbReference type="PaxDb" id="9031-ENSGALP00000030296"/>
<dbReference type="GeneID" id="396284"/>
<dbReference type="KEGG" id="gga:396284"/>
<dbReference type="CTD" id="10627"/>
<dbReference type="VEuPathDB" id="HostDB:geneid_396284"/>
<dbReference type="eggNOG" id="KOG0031">
    <property type="taxonomic scope" value="Eukaryota"/>
</dbReference>
<dbReference type="HOGENOM" id="CLU_061288_9_3_1"/>
<dbReference type="InParanoid" id="P24032"/>
<dbReference type="OMA" id="AHGPINF"/>
<dbReference type="OrthoDB" id="429467at2759"/>
<dbReference type="PhylomeDB" id="P24032"/>
<dbReference type="Reactome" id="R-GGA-3928664">
    <property type="pathway name" value="Ephrin signaling"/>
</dbReference>
<dbReference type="Reactome" id="R-GGA-445355">
    <property type="pathway name" value="Smooth Muscle Contraction"/>
</dbReference>
<dbReference type="Reactome" id="R-GGA-5627123">
    <property type="pathway name" value="RHO GTPases activate PAKs"/>
</dbReference>
<dbReference type="PRO" id="PR:P24032"/>
<dbReference type="Proteomes" id="UP000000539">
    <property type="component" value="Chromosome 2"/>
</dbReference>
<dbReference type="Bgee" id="ENSGALG00000014854">
    <property type="expression patterns" value="Expressed in colon and 14 other cell types or tissues"/>
</dbReference>
<dbReference type="GO" id="GO:0005737">
    <property type="term" value="C:cytoplasm"/>
    <property type="evidence" value="ECO:0000318"/>
    <property type="project" value="GO_Central"/>
</dbReference>
<dbReference type="GO" id="GO:0016460">
    <property type="term" value="C:myosin II complex"/>
    <property type="evidence" value="ECO:0000318"/>
    <property type="project" value="GO_Central"/>
</dbReference>
<dbReference type="GO" id="GO:0005509">
    <property type="term" value="F:calcium ion binding"/>
    <property type="evidence" value="ECO:0007669"/>
    <property type="project" value="InterPro"/>
</dbReference>
<dbReference type="GO" id="GO:0032036">
    <property type="term" value="F:myosin heavy chain binding"/>
    <property type="evidence" value="ECO:0000318"/>
    <property type="project" value="GO_Central"/>
</dbReference>
<dbReference type="CDD" id="cd00051">
    <property type="entry name" value="EFh"/>
    <property type="match status" value="1"/>
</dbReference>
<dbReference type="FunFam" id="1.10.238.10:FF:000010">
    <property type="entry name" value="Myosin regulatory light chain 2, atrial isoform"/>
    <property type="match status" value="1"/>
</dbReference>
<dbReference type="FunFam" id="1.10.238.10:FF:000007">
    <property type="entry name" value="Putative myosin regulatory light chain sqh"/>
    <property type="match status" value="1"/>
</dbReference>
<dbReference type="Gene3D" id="1.10.238.10">
    <property type="entry name" value="EF-hand"/>
    <property type="match status" value="2"/>
</dbReference>
<dbReference type="InterPro" id="IPR011992">
    <property type="entry name" value="EF-hand-dom_pair"/>
</dbReference>
<dbReference type="InterPro" id="IPR018247">
    <property type="entry name" value="EF_Hand_1_Ca_BS"/>
</dbReference>
<dbReference type="InterPro" id="IPR002048">
    <property type="entry name" value="EF_hand_dom"/>
</dbReference>
<dbReference type="InterPro" id="IPR050403">
    <property type="entry name" value="Myosin_RLC"/>
</dbReference>
<dbReference type="PANTHER" id="PTHR23049">
    <property type="entry name" value="MYOSIN REGULATORY LIGHT CHAIN 2"/>
    <property type="match status" value="1"/>
</dbReference>
<dbReference type="Pfam" id="PF13499">
    <property type="entry name" value="EF-hand_7"/>
    <property type="match status" value="2"/>
</dbReference>
<dbReference type="SMART" id="SM00054">
    <property type="entry name" value="EFh"/>
    <property type="match status" value="2"/>
</dbReference>
<dbReference type="SUPFAM" id="SSF47473">
    <property type="entry name" value="EF-hand"/>
    <property type="match status" value="1"/>
</dbReference>
<dbReference type="PROSITE" id="PS00018">
    <property type="entry name" value="EF_HAND_1"/>
    <property type="match status" value="1"/>
</dbReference>
<dbReference type="PROSITE" id="PS50222">
    <property type="entry name" value="EF_HAND_2"/>
    <property type="match status" value="3"/>
</dbReference>
<proteinExistence type="evidence at protein level"/>
<reference key="1">
    <citation type="journal article" date="1989" name="Eur. J. Biochem.">
        <title>Two isoforms of smooth muscle myosin regulatory light chain in chicken gizzard.</title>
        <authorList>
            <person name="Inoue A."/>
            <person name="Yanagisawa M."/>
            <person name="Takano-Ohmuro H."/>
            <person name="Masaki T."/>
        </authorList>
    </citation>
    <scope>NUCLEOTIDE SEQUENCE [MRNA]</scope>
    <source>
        <tissue>Gizzard</tissue>
    </source>
</reference>
<evidence type="ECO:0000250" key="1"/>
<evidence type="ECO:0000255" key="2">
    <source>
        <dbReference type="PROSITE-ProRule" id="PRU00448"/>
    </source>
</evidence>
<evidence type="ECO:0007829" key="3">
    <source>
        <dbReference type="PDB" id="7UDT"/>
    </source>
</evidence>
<protein>
    <recommendedName>
        <fullName>Myosin regulatory light chain 2, smooth muscle minor isoform</fullName>
        <shortName>MLC-2</shortName>
    </recommendedName>
    <alternativeName>
        <fullName>DTNB</fullName>
    </alternativeName>
    <alternativeName>
        <fullName>G1</fullName>
    </alternativeName>
    <alternativeName>
        <fullName>Isoform L20-B1</fullName>
    </alternativeName>
</protein>
<accession>P24032</accession>
<comment type="function">
    <text evidence="1">Myosin regulatory subunit that plays an important role in regulation of both smooth muscle and nonmuscle cell contractile activity. Implicated in cytokinesis, receptor capping, and cell locomotion (By similarity).</text>
</comment>
<comment type="subunit">
    <text>Myosin is a hexamer of 2 heavy chains and 4 light chains.</text>
</comment>
<comment type="PTM">
    <text evidence="1">Phosphorylation increases the actin-activated myosin ATPase activity and thereby regulates the contractile activity.</text>
</comment>
<comment type="miscellaneous">
    <text>This chain binds calcium.</text>
</comment>
<feature type="initiator methionine" description="Removed" evidence="1">
    <location>
        <position position="1"/>
    </location>
</feature>
<feature type="chain" id="PRO_0000198732" description="Myosin regulatory light chain 2, smooth muscle minor isoform">
    <location>
        <begin position="2"/>
        <end position="172"/>
    </location>
</feature>
<feature type="domain" description="EF-hand 1" evidence="2">
    <location>
        <begin position="29"/>
        <end position="64"/>
    </location>
</feature>
<feature type="domain" description="EF-hand 2" evidence="2">
    <location>
        <begin position="98"/>
        <end position="133"/>
    </location>
</feature>
<feature type="domain" description="EF-hand 3" evidence="2">
    <location>
        <begin position="134"/>
        <end position="169"/>
    </location>
</feature>
<feature type="binding site" evidence="2">
    <location>
        <position position="42"/>
    </location>
    <ligand>
        <name>Ca(2+)</name>
        <dbReference type="ChEBI" id="CHEBI:29108"/>
    </ligand>
</feature>
<feature type="binding site" evidence="2">
    <location>
        <position position="44"/>
    </location>
    <ligand>
        <name>Ca(2+)</name>
        <dbReference type="ChEBI" id="CHEBI:29108"/>
    </ligand>
</feature>
<feature type="binding site" evidence="2">
    <location>
        <position position="46"/>
    </location>
    <ligand>
        <name>Ca(2+)</name>
        <dbReference type="ChEBI" id="CHEBI:29108"/>
    </ligand>
</feature>
<feature type="binding site" evidence="2">
    <location>
        <position position="53"/>
    </location>
    <ligand>
        <name>Ca(2+)</name>
        <dbReference type="ChEBI" id="CHEBI:29108"/>
    </ligand>
</feature>
<feature type="modified residue" description="N-acetylserine" evidence="1">
    <location>
        <position position="2"/>
    </location>
</feature>
<feature type="modified residue" description="Phosphothreonine; by MLCK" evidence="1">
    <location>
        <position position="19"/>
    </location>
</feature>
<feature type="modified residue" description="Phosphoserine; by MLCK" evidence="1">
    <location>
        <position position="20"/>
    </location>
</feature>
<feature type="helix" evidence="3">
    <location>
        <begin position="28"/>
        <end position="41"/>
    </location>
</feature>
<feature type="strand" evidence="3">
    <location>
        <begin position="44"/>
        <end position="48"/>
    </location>
</feature>
<feature type="helix" evidence="3">
    <location>
        <begin position="51"/>
        <end position="58"/>
    </location>
</feature>
<feature type="helix" evidence="3">
    <location>
        <begin position="83"/>
        <end position="92"/>
    </location>
</feature>
<feature type="helix" evidence="3">
    <location>
        <begin position="100"/>
        <end position="109"/>
    </location>
</feature>
<feature type="helix" evidence="3">
    <location>
        <begin position="120"/>
        <end position="129"/>
    </location>
</feature>
<feature type="strand" evidence="3">
    <location>
        <begin position="130"/>
        <end position="132"/>
    </location>
</feature>
<feature type="helix" evidence="3">
    <location>
        <begin position="136"/>
        <end position="143"/>
    </location>
</feature>
<feature type="helix" evidence="3">
    <location>
        <begin position="157"/>
        <end position="165"/>
    </location>
</feature>
<name>MLRN_CHICK</name>
<organism>
    <name type="scientific">Gallus gallus</name>
    <name type="common">Chicken</name>
    <dbReference type="NCBI Taxonomy" id="9031"/>
    <lineage>
        <taxon>Eukaryota</taxon>
        <taxon>Metazoa</taxon>
        <taxon>Chordata</taxon>
        <taxon>Craniata</taxon>
        <taxon>Vertebrata</taxon>
        <taxon>Euteleostomi</taxon>
        <taxon>Archelosauria</taxon>
        <taxon>Archosauria</taxon>
        <taxon>Dinosauria</taxon>
        <taxon>Saurischia</taxon>
        <taxon>Theropoda</taxon>
        <taxon>Coelurosauria</taxon>
        <taxon>Aves</taxon>
        <taxon>Neognathae</taxon>
        <taxon>Galloanserae</taxon>
        <taxon>Galliformes</taxon>
        <taxon>Phasianidae</taxon>
        <taxon>Phasianinae</taxon>
        <taxon>Gallus</taxon>
    </lineage>
</organism>